<dbReference type="EMBL" id="CP000554">
    <property type="protein sequence ID" value="ABM79621.1"/>
    <property type="molecule type" value="Genomic_DNA"/>
</dbReference>
<dbReference type="RefSeq" id="WP_011827462.1">
    <property type="nucleotide sequence ID" value="NC_008820.1"/>
</dbReference>
<dbReference type="SMR" id="A2CDR1"/>
<dbReference type="STRING" id="59922.P9303_28911"/>
<dbReference type="KEGG" id="pmf:P9303_28911"/>
<dbReference type="HOGENOM" id="CLU_097408_2_0_3"/>
<dbReference type="BioCyc" id="PMAR59922:G1G80-2534-MONOMER"/>
<dbReference type="Proteomes" id="UP000002274">
    <property type="component" value="Chromosome"/>
</dbReference>
<dbReference type="GO" id="GO:0005829">
    <property type="term" value="C:cytosol"/>
    <property type="evidence" value="ECO:0007669"/>
    <property type="project" value="TreeGrafter"/>
</dbReference>
<dbReference type="GO" id="GO:0005960">
    <property type="term" value="C:glycine cleavage complex"/>
    <property type="evidence" value="ECO:0007669"/>
    <property type="project" value="InterPro"/>
</dbReference>
<dbReference type="GO" id="GO:0019464">
    <property type="term" value="P:glycine decarboxylation via glycine cleavage system"/>
    <property type="evidence" value="ECO:0007669"/>
    <property type="project" value="UniProtKB-UniRule"/>
</dbReference>
<dbReference type="CDD" id="cd06848">
    <property type="entry name" value="GCS_H"/>
    <property type="match status" value="1"/>
</dbReference>
<dbReference type="Gene3D" id="2.40.50.100">
    <property type="match status" value="1"/>
</dbReference>
<dbReference type="HAMAP" id="MF_00272">
    <property type="entry name" value="GcvH"/>
    <property type="match status" value="1"/>
</dbReference>
<dbReference type="InterPro" id="IPR003016">
    <property type="entry name" value="2-oxoA_DH_lipoyl-BS"/>
</dbReference>
<dbReference type="InterPro" id="IPR000089">
    <property type="entry name" value="Biotin_lipoyl"/>
</dbReference>
<dbReference type="InterPro" id="IPR002930">
    <property type="entry name" value="GCV_H"/>
</dbReference>
<dbReference type="InterPro" id="IPR033753">
    <property type="entry name" value="GCV_H/Fam206"/>
</dbReference>
<dbReference type="InterPro" id="IPR017453">
    <property type="entry name" value="GCV_H_sub"/>
</dbReference>
<dbReference type="InterPro" id="IPR011053">
    <property type="entry name" value="Single_hybrid_motif"/>
</dbReference>
<dbReference type="NCBIfam" id="TIGR00527">
    <property type="entry name" value="gcvH"/>
    <property type="match status" value="1"/>
</dbReference>
<dbReference type="NCBIfam" id="NF002270">
    <property type="entry name" value="PRK01202.1"/>
    <property type="match status" value="1"/>
</dbReference>
<dbReference type="PANTHER" id="PTHR11715">
    <property type="entry name" value="GLYCINE CLEAVAGE SYSTEM H PROTEIN"/>
    <property type="match status" value="1"/>
</dbReference>
<dbReference type="PANTHER" id="PTHR11715:SF3">
    <property type="entry name" value="GLYCINE CLEAVAGE SYSTEM H PROTEIN-RELATED"/>
    <property type="match status" value="1"/>
</dbReference>
<dbReference type="Pfam" id="PF01597">
    <property type="entry name" value="GCV_H"/>
    <property type="match status" value="1"/>
</dbReference>
<dbReference type="SUPFAM" id="SSF51230">
    <property type="entry name" value="Single hybrid motif"/>
    <property type="match status" value="1"/>
</dbReference>
<dbReference type="PROSITE" id="PS50968">
    <property type="entry name" value="BIOTINYL_LIPOYL"/>
    <property type="match status" value="1"/>
</dbReference>
<dbReference type="PROSITE" id="PS00189">
    <property type="entry name" value="LIPOYL"/>
    <property type="match status" value="1"/>
</dbReference>
<keyword id="KW-0450">Lipoyl</keyword>
<proteinExistence type="inferred from homology"/>
<accession>A2CDR1</accession>
<feature type="chain" id="PRO_0000302412" description="Glycine cleavage system H protein">
    <location>
        <begin position="1"/>
        <end position="129"/>
    </location>
</feature>
<feature type="domain" description="Lipoyl-binding" evidence="2">
    <location>
        <begin position="24"/>
        <end position="106"/>
    </location>
</feature>
<feature type="modified residue" description="N6-lipoyllysine" evidence="1">
    <location>
        <position position="65"/>
    </location>
</feature>
<gene>
    <name evidence="1" type="primary">gcvH</name>
    <name type="ordered locus">P9303_28911</name>
</gene>
<sequence length="129" mass="14022">MAFQFPDHFRFADTHEYASLDGDLVRVGISAFAVDQLGDIVFVDLPEVGDLLNRGTTFGSVESVKAVEDLHAPISGELVRINESVLSSPDELQNDPHGEGWLLVVRPADPAQLQDLMDAATYANKVAVE</sequence>
<evidence type="ECO:0000255" key="1">
    <source>
        <dbReference type="HAMAP-Rule" id="MF_00272"/>
    </source>
</evidence>
<evidence type="ECO:0000255" key="2">
    <source>
        <dbReference type="PROSITE-ProRule" id="PRU01066"/>
    </source>
</evidence>
<organism>
    <name type="scientific">Prochlorococcus marinus (strain MIT 9303)</name>
    <dbReference type="NCBI Taxonomy" id="59922"/>
    <lineage>
        <taxon>Bacteria</taxon>
        <taxon>Bacillati</taxon>
        <taxon>Cyanobacteriota</taxon>
        <taxon>Cyanophyceae</taxon>
        <taxon>Synechococcales</taxon>
        <taxon>Prochlorococcaceae</taxon>
        <taxon>Prochlorococcus</taxon>
    </lineage>
</organism>
<reference key="1">
    <citation type="journal article" date="2007" name="PLoS Genet.">
        <title>Patterns and implications of gene gain and loss in the evolution of Prochlorococcus.</title>
        <authorList>
            <person name="Kettler G.C."/>
            <person name="Martiny A.C."/>
            <person name="Huang K."/>
            <person name="Zucker J."/>
            <person name="Coleman M.L."/>
            <person name="Rodrigue S."/>
            <person name="Chen F."/>
            <person name="Lapidus A."/>
            <person name="Ferriera S."/>
            <person name="Johnson J."/>
            <person name="Steglich C."/>
            <person name="Church G.M."/>
            <person name="Richardson P."/>
            <person name="Chisholm S.W."/>
        </authorList>
    </citation>
    <scope>NUCLEOTIDE SEQUENCE [LARGE SCALE GENOMIC DNA]</scope>
    <source>
        <strain>MIT 9303</strain>
    </source>
</reference>
<comment type="function">
    <text evidence="1">The glycine cleavage system catalyzes the degradation of glycine. The H protein shuttles the methylamine group of glycine from the P protein to the T protein.</text>
</comment>
<comment type="cofactor">
    <cofactor evidence="1">
        <name>(R)-lipoate</name>
        <dbReference type="ChEBI" id="CHEBI:83088"/>
    </cofactor>
    <text evidence="1">Binds 1 lipoyl cofactor covalently.</text>
</comment>
<comment type="subunit">
    <text evidence="1">The glycine cleavage system is composed of four proteins: P, T, L and H.</text>
</comment>
<comment type="similarity">
    <text evidence="1">Belongs to the GcvH family.</text>
</comment>
<name>GCSH_PROM3</name>
<protein>
    <recommendedName>
        <fullName evidence="1">Glycine cleavage system H protein</fullName>
    </recommendedName>
</protein>